<gene>
    <name evidence="5" type="primary">FUS2</name>
    <name type="ORF">FVEG_11085</name>
</gene>
<feature type="chain" id="PRO_0000437358" description="20-hydroxy-prefusarin hydrolase FUS2">
    <location>
        <begin position="1"/>
        <end position="419"/>
    </location>
</feature>
<feature type="active site" evidence="1">
    <location>
        <position position="238"/>
    </location>
</feature>
<keyword id="KW-0378">Hydrolase</keyword>
<keyword id="KW-1185">Reference proteome</keyword>
<sequence length="419" mass="46314">MHKVFASDFFNFEFLRLLGTVPFQGAEVGECLTTAGRIKDGDPESWYRAWRDQAEKAQALAEEAAAVGDRTGACWAYIRAANYWRASEFLLHCTPNDPRILAASKASVNAFDKGWVLLDATVKSFEIPYDKDIKLPGRLYLPAPHHRLPGKIPVVLQTGGFDSTQEELYFYGAAGALPRGYAVFSFDGPGQGLPLRVGKLKLRTDWEYVVSQVLDFVTDDIAPEYDLDLERLAIFGASLGGYLSLRAAVDPRIKACISCDGPLDLFEITRSRMPSWFINGWLSGWVSDGLFNWVVDALTAVNFQIAWEFGHGKWVFGVETPADVLRVMQQISLKGGYLSKIKCPTLITGAADSFYFTPDINANPIFEGLTALGSNEKHLWIGKGVEGGGLQAKIGALAVVHHKMFTWLDSTFAIKRDVL</sequence>
<evidence type="ECO:0000250" key="1">
    <source>
        <dbReference type="UniProtKB" id="Q93NG6"/>
    </source>
</evidence>
<evidence type="ECO:0000250" key="2">
    <source>
        <dbReference type="UniProtKB" id="S0EE80"/>
    </source>
</evidence>
<evidence type="ECO:0000269" key="3">
    <source>
    </source>
</evidence>
<evidence type="ECO:0000269" key="4">
    <source>
    </source>
</evidence>
<evidence type="ECO:0000303" key="5">
    <source>
    </source>
</evidence>
<evidence type="ECO:0000305" key="6"/>
<evidence type="ECO:0000305" key="7">
    <source>
    </source>
</evidence>
<proteinExistence type="inferred from homology"/>
<comment type="function">
    <text evidence="2 3 4">20-hydroxy-prefusarin hydrolase; part of the gene cluster that mediates the biosynthesis of the mycotoxin fusarin C (PubMed:17121404, PubMed:22652150). Within the cluster, FUS1, FUS2, FUS8 and FUS9 are sufficient for fusarin production (By similarity). The roles of the other FUS members are yet undetermined (By similarity). The fusarin C synthetase FUS1 is responsible for the condensation of one acetyl-coenzyme A (CoA) unit with six malonyl-CoA units and the amide linkage of the arising heptaketide and homoserine, subsequently releasing the first intermediate, prefusarin, as an alcohol with an open ring structure (PubMed:17121404). The cytochrome P450 monooxygenase FUS8 participates in multiple oxidation processes at carbon C-20 and is able to use the FUS1 product as substrate, resulting in formation of 20-hydroxy-prefusarin (By similarity). This reaction seems to be essential before the 2-pyrrolidone ring closure can be catalyzed by FUS2, generating 20-hydroxy-fusarin (By similarity). FUS8 is able to further oxidizes carbon C-20 after ring closure, resulting in the formation of carboxy-fusarin C (By similarity). As the last step, FUS9 methylates the hydroxyl group at C-21 to generate fusarin C (By similarity). Fusarin C can then rearrange to epi-fusarin C, the (z)-isomers, and fusarin A and fusarin D (By similarity).</text>
</comment>
<comment type="pathway">
    <text evidence="2 7">Mycotoxin biosynthesis.</text>
</comment>
<comment type="similarity">
    <text evidence="6">Belongs to the AB hydrolase superfamily. FUS2 hydrolase family.</text>
</comment>
<organism>
    <name type="scientific">Gibberella moniliformis (strain M3125 / FGSC 7600)</name>
    <name type="common">Maize ear and stalk rot fungus</name>
    <name type="synonym">Fusarium verticillioides</name>
    <dbReference type="NCBI Taxonomy" id="334819"/>
    <lineage>
        <taxon>Eukaryota</taxon>
        <taxon>Fungi</taxon>
        <taxon>Dikarya</taxon>
        <taxon>Ascomycota</taxon>
        <taxon>Pezizomycotina</taxon>
        <taxon>Sordariomycetes</taxon>
        <taxon>Hypocreomycetidae</taxon>
        <taxon>Hypocreales</taxon>
        <taxon>Nectriaceae</taxon>
        <taxon>Fusarium</taxon>
        <taxon>Fusarium fujikuroi species complex</taxon>
    </lineage>
</organism>
<accession>W7N6P0</accession>
<reference key="1">
    <citation type="journal article" date="2010" name="Nature">
        <title>Comparative genomics reveals mobile pathogenicity chromosomes in Fusarium.</title>
        <authorList>
            <person name="Ma L.-J."/>
            <person name="van der Does H.C."/>
            <person name="Borkovich K.A."/>
            <person name="Coleman J.J."/>
            <person name="Daboussi M.-J."/>
            <person name="Di Pietro A."/>
            <person name="Dufresne M."/>
            <person name="Freitag M."/>
            <person name="Grabherr M."/>
            <person name="Henrissat B."/>
            <person name="Houterman P.M."/>
            <person name="Kang S."/>
            <person name="Shim W.-B."/>
            <person name="Woloshuk C."/>
            <person name="Xie X."/>
            <person name="Xu J.-R."/>
            <person name="Antoniw J."/>
            <person name="Baker S.E."/>
            <person name="Bluhm B.H."/>
            <person name="Breakspear A."/>
            <person name="Brown D.W."/>
            <person name="Butchko R.A.E."/>
            <person name="Chapman S."/>
            <person name="Coulson R."/>
            <person name="Coutinho P.M."/>
            <person name="Danchin E.G.J."/>
            <person name="Diener A."/>
            <person name="Gale L.R."/>
            <person name="Gardiner D.M."/>
            <person name="Goff S."/>
            <person name="Hammond-Kosack K.E."/>
            <person name="Hilburn K."/>
            <person name="Hua-Van A."/>
            <person name="Jonkers W."/>
            <person name="Kazan K."/>
            <person name="Kodira C.D."/>
            <person name="Koehrsen M."/>
            <person name="Kumar L."/>
            <person name="Lee Y.-H."/>
            <person name="Li L."/>
            <person name="Manners J.M."/>
            <person name="Miranda-Saavedra D."/>
            <person name="Mukherjee M."/>
            <person name="Park G."/>
            <person name="Park J."/>
            <person name="Park S.-Y."/>
            <person name="Proctor R.H."/>
            <person name="Regev A."/>
            <person name="Ruiz-Roldan M.C."/>
            <person name="Sain D."/>
            <person name="Sakthikumar S."/>
            <person name="Sykes S."/>
            <person name="Schwartz D.C."/>
            <person name="Turgeon B.G."/>
            <person name="Wapinski I."/>
            <person name="Yoder O."/>
            <person name="Young S."/>
            <person name="Zeng Q."/>
            <person name="Zhou S."/>
            <person name="Galagan J."/>
            <person name="Cuomo C.A."/>
            <person name="Kistler H.C."/>
            <person name="Rep M."/>
        </authorList>
    </citation>
    <scope>NUCLEOTIDE SEQUENCE [LARGE SCALE GENOMIC DNA]</scope>
    <source>
        <strain>M3125 / FGSC 7600</strain>
    </source>
</reference>
<reference key="2">
    <citation type="journal article" date="2007" name="ChemBioChem">
        <title>Synthesis of [1,2-13C2, 15N]-L-homoserine and its incorporation by the PKS-NRPS system of Fusarium moniliforme into the mycotoxin fusarin C.</title>
        <authorList>
            <person name="Rees D.O."/>
            <person name="Bushby N."/>
            <person name="Cox R.J."/>
            <person name="Harding J.R."/>
            <person name="Simpson T.J."/>
            <person name="Willis C.L."/>
        </authorList>
    </citation>
    <scope>FUNCTION</scope>
</reference>
<reference key="3">
    <citation type="journal article" date="2012" name="Fungal Genet. Biol.">
        <title>Identification of gene clusters associated with fusaric acid, fusarin, and perithecial pigment production in Fusarium verticillioides.</title>
        <authorList>
            <person name="Brown D.W."/>
            <person name="Butchko R.A."/>
            <person name="Busman M."/>
            <person name="Proctor R.H."/>
        </authorList>
    </citation>
    <scope>FUNCTION</scope>
</reference>
<dbReference type="EC" id="3.7.1.-" evidence="2"/>
<dbReference type="EMBL" id="CM000586">
    <property type="protein sequence ID" value="EWG52307.1"/>
    <property type="molecule type" value="Genomic_DNA"/>
</dbReference>
<dbReference type="RefSeq" id="XP_018758498.1">
    <property type="nucleotide sequence ID" value="XM_018900248.1"/>
</dbReference>
<dbReference type="SMR" id="W7N6P0"/>
<dbReference type="ESTHER" id="gibf5-fus2">
    <property type="family name" value="Duf_1100-S"/>
</dbReference>
<dbReference type="EnsemblFungi" id="FVEG_11085T0">
    <property type="protein sequence ID" value="FVEG_11085T0"/>
    <property type="gene ID" value="FVEG_11085"/>
</dbReference>
<dbReference type="GeneID" id="30068621"/>
<dbReference type="KEGG" id="fvr:FVEG_11085"/>
<dbReference type="VEuPathDB" id="FungiDB:FVEG_11085"/>
<dbReference type="eggNOG" id="ENOG502QPTG">
    <property type="taxonomic scope" value="Eukaryota"/>
</dbReference>
<dbReference type="HOGENOM" id="CLU_034451_0_0_1"/>
<dbReference type="OMA" id="RWEFGHS"/>
<dbReference type="OrthoDB" id="135189at110618"/>
<dbReference type="Proteomes" id="UP000009096">
    <property type="component" value="Chromosome 9"/>
</dbReference>
<dbReference type="GO" id="GO:0016787">
    <property type="term" value="F:hydrolase activity"/>
    <property type="evidence" value="ECO:0007669"/>
    <property type="project" value="UniProtKB-KW"/>
</dbReference>
<dbReference type="Gene3D" id="1.20.1440.110">
    <property type="entry name" value="acylaminoacyl peptidase"/>
    <property type="match status" value="1"/>
</dbReference>
<dbReference type="Gene3D" id="3.40.50.1820">
    <property type="entry name" value="alpha/beta hydrolase"/>
    <property type="match status" value="1"/>
</dbReference>
<dbReference type="InterPro" id="IPR029058">
    <property type="entry name" value="AB_hydrolase_fold"/>
</dbReference>
<dbReference type="InterPro" id="IPR010520">
    <property type="entry name" value="FrsA-like"/>
</dbReference>
<dbReference type="InterPro" id="IPR050261">
    <property type="entry name" value="FrsA_esterase"/>
</dbReference>
<dbReference type="PANTHER" id="PTHR22946:SF13">
    <property type="entry name" value="ALPHA_BETA HYDROLASE PSOB"/>
    <property type="match status" value="1"/>
</dbReference>
<dbReference type="PANTHER" id="PTHR22946">
    <property type="entry name" value="DIENELACTONE HYDROLASE DOMAIN-CONTAINING PROTEIN-RELATED"/>
    <property type="match status" value="1"/>
</dbReference>
<dbReference type="Pfam" id="PF06500">
    <property type="entry name" value="FrsA-like"/>
    <property type="match status" value="1"/>
</dbReference>
<dbReference type="SUPFAM" id="SSF53474">
    <property type="entry name" value="alpha/beta-Hydrolases"/>
    <property type="match status" value="1"/>
</dbReference>
<protein>
    <recommendedName>
        <fullName evidence="2">20-hydroxy-prefusarin hydrolase FUS2</fullName>
        <ecNumber evidence="2">3.7.1.-</ecNumber>
    </recommendedName>
    <alternativeName>
        <fullName evidence="5">Fusarin biosynthesis protein 2</fullName>
    </alternativeName>
</protein>
<name>FUS2_GIBM7</name>